<name>CYPLA_PSYBR</name>
<proteinExistence type="evidence at protein level"/>
<reference evidence="4" key="1">
    <citation type="journal article" date="2016" name="J. Nat. Prod.">
        <title>Isolation and Characterization of Cyclotides from Brazilian Psychotria: Significance in Plant Defense and Co-occurrence with Antioxidant Alkaloids.</title>
        <authorList>
            <person name="Matsuura H.N."/>
            <person name="Poth A.G."/>
            <person name="Yendo A.C."/>
            <person name="Fett-Neto A.G."/>
            <person name="Craik D.J."/>
        </authorList>
    </citation>
    <scope>PROTEIN SEQUENCE</scope>
    <scope>MASS SPECTROMETRY</scope>
    <scope>IDENTIFICATION BY MASS SPECTROMETRY</scope>
    <scope>CYCLIZATION</scope>
    <source>
        <tissue evidence="3">Leaf</tissue>
    </source>
</reference>
<accession>C0HL24</accession>
<comment type="function">
    <text evidence="1">Probably participates in a plant defense mechanism.</text>
</comment>
<comment type="domain">
    <text evidence="4">The presence of a 'disulfide through disulfide knot' structurally defines this protein as a knottin.</text>
</comment>
<comment type="PTM">
    <text evidence="1 2">This is a cyclic peptide.</text>
</comment>
<comment type="mass spectrometry" mass="3354.22" method="MALDI" evidence="2"/>
<comment type="similarity">
    <text evidence="1">Belongs to the cyclotide family. Moebius subfamily.</text>
</comment>
<comment type="caution">
    <text evidence="1">This peptide is cyclic. The start position was chosen by similarity to Oak1 (kalata B1) for which the DNA sequence is known.</text>
</comment>
<feature type="peptide" id="PRO_0000441786" description="Cyclotide psyleio A" evidence="2">
    <location>
        <begin position="1"/>
        <end position="29"/>
    </location>
</feature>
<feature type="disulfide bond" evidence="1">
    <location>
        <begin position="5"/>
        <end position="19"/>
    </location>
</feature>
<feature type="disulfide bond" evidence="1">
    <location>
        <begin position="9"/>
        <end position="21"/>
    </location>
</feature>
<feature type="disulfide bond" evidence="1">
    <location>
        <begin position="14"/>
        <end position="26"/>
    </location>
</feature>
<feature type="cross-link" description="Cyclopeptide (Gly-Asp)" evidence="5">
    <location>
        <begin position="1"/>
        <end position="29"/>
    </location>
</feature>
<feature type="unsure residue" description="L or I" evidence="3">
    <location>
        <position position="2"/>
    </location>
</feature>
<feature type="unsure residue" description="I or L" evidence="3">
    <location>
        <position position="4"/>
    </location>
</feature>
<feature type="unsure residue" description="I or L" evidence="3">
    <location>
        <position position="25"/>
    </location>
</feature>
<organism>
    <name type="scientific">Psychotria brachyceras</name>
    <dbReference type="NCBI Taxonomy" id="980682"/>
    <lineage>
        <taxon>Eukaryota</taxon>
        <taxon>Viridiplantae</taxon>
        <taxon>Streptophyta</taxon>
        <taxon>Embryophyta</taxon>
        <taxon>Tracheophyta</taxon>
        <taxon>Spermatophyta</taxon>
        <taxon>Magnoliopsida</taxon>
        <taxon>eudicotyledons</taxon>
        <taxon>Gunneridae</taxon>
        <taxon>Pentapetalae</taxon>
        <taxon>asterids</taxon>
        <taxon>lamiids</taxon>
        <taxon>Gentianales</taxon>
        <taxon>Rubiaceae</taxon>
        <taxon>Rubioideae</taxon>
        <taxon>Psychotrieae</taxon>
        <taxon>Psychotria</taxon>
    </lineage>
</organism>
<protein>
    <recommendedName>
        <fullName evidence="3">Cyclotide psyleio A</fullName>
    </recommendedName>
</protein>
<sequence length="29" mass="3014">GLPICGETCFTGTCNTPGCSCTYPICTRD</sequence>
<dbReference type="SMR" id="C0HL24"/>
<dbReference type="TCDB" id="8.B.33.1.2">
    <property type="family name" value="the trpa1-activating peptide, tx ueg-12-1 (tx-ueg) family"/>
</dbReference>
<dbReference type="GO" id="GO:0006952">
    <property type="term" value="P:defense response"/>
    <property type="evidence" value="ECO:0007669"/>
    <property type="project" value="UniProtKB-KW"/>
</dbReference>
<dbReference type="InterPro" id="IPR005535">
    <property type="entry name" value="Cyclotide"/>
</dbReference>
<dbReference type="InterPro" id="IPR012324">
    <property type="entry name" value="Cyclotide_moebius_CS"/>
</dbReference>
<dbReference type="InterPro" id="IPR036146">
    <property type="entry name" value="Cyclotide_sf"/>
</dbReference>
<dbReference type="Pfam" id="PF03784">
    <property type="entry name" value="Cyclotide"/>
    <property type="match status" value="1"/>
</dbReference>
<dbReference type="PIRSF" id="PIRSF037891">
    <property type="entry name" value="Cycloviolacin"/>
    <property type="match status" value="1"/>
</dbReference>
<dbReference type="SUPFAM" id="SSF57038">
    <property type="entry name" value="Cyclotides"/>
    <property type="match status" value="1"/>
</dbReference>
<dbReference type="PROSITE" id="PS51052">
    <property type="entry name" value="CYCLOTIDE"/>
    <property type="match status" value="1"/>
</dbReference>
<dbReference type="PROSITE" id="PS60009">
    <property type="entry name" value="CYCLOTIDE_MOEBIUS"/>
    <property type="match status" value="1"/>
</dbReference>
<keyword id="KW-0903">Direct protein sequencing</keyword>
<keyword id="KW-1015">Disulfide bond</keyword>
<keyword id="KW-0960">Knottin</keyword>
<keyword id="KW-0611">Plant defense</keyword>
<evidence type="ECO:0000255" key="1">
    <source>
        <dbReference type="PROSITE-ProRule" id="PRU00395"/>
    </source>
</evidence>
<evidence type="ECO:0000269" key="2">
    <source>
    </source>
</evidence>
<evidence type="ECO:0000303" key="3">
    <source>
    </source>
</evidence>
<evidence type="ECO:0000305" key="4"/>
<evidence type="ECO:0000305" key="5">
    <source>
    </source>
</evidence>